<organism>
    <name type="scientific">Aliivibrio fischeri (strain ATCC 700601 / ES114)</name>
    <name type="common">Vibrio fischeri</name>
    <dbReference type="NCBI Taxonomy" id="312309"/>
    <lineage>
        <taxon>Bacteria</taxon>
        <taxon>Pseudomonadati</taxon>
        <taxon>Pseudomonadota</taxon>
        <taxon>Gammaproteobacteria</taxon>
        <taxon>Vibrionales</taxon>
        <taxon>Vibrionaceae</taxon>
        <taxon>Aliivibrio</taxon>
    </lineage>
</organism>
<proteinExistence type="inferred from homology"/>
<keyword id="KW-0071">Autoinducer synthesis</keyword>
<keyword id="KW-0455">Luminescence</keyword>
<keyword id="KW-0673">Quorum sensing</keyword>
<keyword id="KW-1185">Reference proteome</keyword>
<keyword id="KW-0949">S-adenosyl-L-methionine</keyword>
<keyword id="KW-0808">Transferase</keyword>
<name>LUXJ_ALIF1</name>
<evidence type="ECO:0000255" key="1">
    <source>
        <dbReference type="PROSITE-ProRule" id="PRU00533"/>
    </source>
</evidence>
<evidence type="ECO:0000305" key="2"/>
<sequence length="193" mass="22014">MAVMIKKSDFLGIPSEEYRGILSLRYQVFKRRLEWDLVSEDNLESDEYDNSNAEYIYACDDAEEVNGCWRLLPTTGDYMLKTVFPELLGDQVAPRDPNIVELSRFAVGKNSSKINNSASEITMKLFQAIYKHAVSQGITEYVTVTSIAIERFLKRIKVPCHRIGDKEIHLLGNTRSVVLSMPINDQFRKAVSN</sequence>
<accession>P35328</accession>
<accession>Q5DZ02</accession>
<comment type="function">
    <text>Required for the synthesis of OHHL (N-(3-oxohexanoyl)-L-homoserine lactone) also known as VAI or N-(beta-ketocaproyl)homoserine lactone or 3-oxo-N-(tetrahydro-2-oxo-3-furanyl)-hexanamide, an autoinducer molecule which binds to LuxR and thus acts in bioluminescence regulation.</text>
</comment>
<comment type="catalytic activity">
    <reaction>
        <text>a fatty acyl-[ACP] + S-adenosyl-L-methionine = an N-acyl-L-homoserine lactone + S-methyl-5'-thioadenosine + holo-[ACP] + H(+)</text>
        <dbReference type="Rhea" id="RHEA:10096"/>
        <dbReference type="Rhea" id="RHEA-COMP:9685"/>
        <dbReference type="Rhea" id="RHEA-COMP:14125"/>
        <dbReference type="ChEBI" id="CHEBI:15378"/>
        <dbReference type="ChEBI" id="CHEBI:17509"/>
        <dbReference type="ChEBI" id="CHEBI:55474"/>
        <dbReference type="ChEBI" id="CHEBI:59789"/>
        <dbReference type="ChEBI" id="CHEBI:64479"/>
        <dbReference type="ChEBI" id="CHEBI:138651"/>
        <dbReference type="EC" id="2.3.1.184"/>
    </reaction>
</comment>
<comment type="similarity">
    <text evidence="1">Belongs to the autoinducer synthase family.</text>
</comment>
<comment type="sequence caution" evidence="2">
    <conflict type="erroneous initiation">
        <sequence resource="EMBL-CDS" id="AAW87994"/>
    </conflict>
</comment>
<reference key="1">
    <citation type="journal article" date="1992" name="Mol. Mar. Biol. Biotechnol.">
        <title>Sequencing and analysis of luxR and luxI, the luminescence regulatory genes from the squid light organ symbiont Vibrio fischeri ES114.</title>
        <authorList>
            <person name="Gray K.M."/>
            <person name="Greenberg E.P."/>
        </authorList>
    </citation>
    <scope>NUCLEOTIDE SEQUENCE [GENOMIC DNA]</scope>
</reference>
<reference key="2">
    <citation type="journal article" date="2005" name="Proc. Natl. Acad. Sci. U.S.A.">
        <title>Complete genome sequence of Vibrio fischeri: a symbiotic bacterium with pathogenic congeners.</title>
        <authorList>
            <person name="Ruby E.G."/>
            <person name="Urbanowski M."/>
            <person name="Campbell J."/>
            <person name="Dunn A."/>
            <person name="Faini M."/>
            <person name="Gunsalus R."/>
            <person name="Lostroh P."/>
            <person name="Lupp C."/>
            <person name="McCann J."/>
            <person name="Millikan D."/>
            <person name="Schaefer A."/>
            <person name="Stabb E."/>
            <person name="Stevens A."/>
            <person name="Visick K."/>
            <person name="Whistler C."/>
            <person name="Greenberg E.P."/>
        </authorList>
    </citation>
    <scope>NUCLEOTIDE SEQUENCE [LARGE SCALE GENOMIC DNA]</scope>
    <source>
        <strain>ATCC 700601 / ES114</strain>
    </source>
</reference>
<protein>
    <recommendedName>
        <fullName>Acyl-homoserine-lactone synthase</fullName>
        <ecNumber>2.3.1.184</ecNumber>
    </recommendedName>
    <alternativeName>
        <fullName>Autoinducer synthesis protein LuxI</fullName>
    </alternativeName>
</protein>
<gene>
    <name type="primary">luxI</name>
    <name type="ordered locus">VF_A0924</name>
</gene>
<feature type="chain" id="PRO_0000210889" description="Acyl-homoserine-lactone synthase">
    <location>
        <begin position="1"/>
        <end position="193"/>
    </location>
</feature>
<dbReference type="EC" id="2.3.1.184"/>
<dbReference type="EMBL" id="M96844">
    <property type="protein sequence ID" value="AAA27543.1"/>
    <property type="molecule type" value="Genomic_DNA"/>
</dbReference>
<dbReference type="EMBL" id="CP000021">
    <property type="protein sequence ID" value="AAW87994.1"/>
    <property type="status" value="ALT_INIT"/>
    <property type="molecule type" value="Genomic_DNA"/>
</dbReference>
<dbReference type="RefSeq" id="WP_047863343.1">
    <property type="nucleotide sequence ID" value="NC_006841.2"/>
</dbReference>
<dbReference type="RefSeq" id="YP_206882.1">
    <property type="nucleotide sequence ID" value="NC_006841.2"/>
</dbReference>
<dbReference type="SMR" id="P35328"/>
<dbReference type="STRING" id="312309.VF_A0924"/>
<dbReference type="EnsemblBacteria" id="AAW87994">
    <property type="protein sequence ID" value="AAW87994"/>
    <property type="gene ID" value="VF_A0924"/>
</dbReference>
<dbReference type="GeneID" id="54166245"/>
<dbReference type="KEGG" id="vfi:VF_A0924"/>
<dbReference type="PATRIC" id="fig|312309.11.peg.3526"/>
<dbReference type="eggNOG" id="COG3916">
    <property type="taxonomic scope" value="Bacteria"/>
</dbReference>
<dbReference type="HOGENOM" id="CLU_085711_2_1_6"/>
<dbReference type="OrthoDB" id="6023281at2"/>
<dbReference type="Proteomes" id="UP000000537">
    <property type="component" value="Chromosome II"/>
</dbReference>
<dbReference type="GO" id="GO:0061579">
    <property type="term" value="F:N-acyl homoserine lactone synthase activity"/>
    <property type="evidence" value="ECO:0007669"/>
    <property type="project" value="UniProtKB-EC"/>
</dbReference>
<dbReference type="GO" id="GO:0008218">
    <property type="term" value="P:bioluminescence"/>
    <property type="evidence" value="ECO:0007669"/>
    <property type="project" value="UniProtKB-KW"/>
</dbReference>
<dbReference type="GO" id="GO:0009372">
    <property type="term" value="P:quorum sensing"/>
    <property type="evidence" value="ECO:0007669"/>
    <property type="project" value="UniProtKB-KW"/>
</dbReference>
<dbReference type="GO" id="GO:0007165">
    <property type="term" value="P:signal transduction"/>
    <property type="evidence" value="ECO:0007669"/>
    <property type="project" value="TreeGrafter"/>
</dbReference>
<dbReference type="Gene3D" id="3.40.630.30">
    <property type="match status" value="1"/>
</dbReference>
<dbReference type="InterPro" id="IPR016181">
    <property type="entry name" value="Acyl_CoA_acyltransferase"/>
</dbReference>
<dbReference type="InterPro" id="IPR018311">
    <property type="entry name" value="Autoind_synth_CS"/>
</dbReference>
<dbReference type="InterPro" id="IPR001690">
    <property type="entry name" value="Autoind_synthase"/>
</dbReference>
<dbReference type="PANTHER" id="PTHR39322">
    <property type="entry name" value="ACYL-HOMOSERINE-LACTONE SYNTHASE"/>
    <property type="match status" value="1"/>
</dbReference>
<dbReference type="PANTHER" id="PTHR39322:SF1">
    <property type="entry name" value="ISOVALERYL-HOMOSERINE LACTONE SYNTHASE"/>
    <property type="match status" value="1"/>
</dbReference>
<dbReference type="Pfam" id="PF00765">
    <property type="entry name" value="Autoind_synth"/>
    <property type="match status" value="1"/>
</dbReference>
<dbReference type="PRINTS" id="PR01549">
    <property type="entry name" value="AUTOINDCRSYN"/>
</dbReference>
<dbReference type="SUPFAM" id="SSF55729">
    <property type="entry name" value="Acyl-CoA N-acyltransferases (Nat)"/>
    <property type="match status" value="1"/>
</dbReference>
<dbReference type="PROSITE" id="PS00949">
    <property type="entry name" value="AUTOINDUCER_SYNTH_1"/>
    <property type="match status" value="1"/>
</dbReference>
<dbReference type="PROSITE" id="PS51187">
    <property type="entry name" value="AUTOINDUCER_SYNTH_2"/>
    <property type="match status" value="1"/>
</dbReference>